<protein>
    <recommendedName>
        <fullName>Uncharacterized transmembrane protein DDB_G0291364</fullName>
    </recommendedName>
</protein>
<accession>Q54ES5</accession>
<proteinExistence type="inferred from homology"/>
<organism>
    <name type="scientific">Dictyostelium discoideum</name>
    <name type="common">Social amoeba</name>
    <dbReference type="NCBI Taxonomy" id="44689"/>
    <lineage>
        <taxon>Eukaryota</taxon>
        <taxon>Amoebozoa</taxon>
        <taxon>Evosea</taxon>
        <taxon>Eumycetozoa</taxon>
        <taxon>Dictyostelia</taxon>
        <taxon>Dictyosteliales</taxon>
        <taxon>Dictyosteliaceae</taxon>
        <taxon>Dictyostelium</taxon>
    </lineage>
</organism>
<keyword id="KW-0325">Glycoprotein</keyword>
<keyword id="KW-0472">Membrane</keyword>
<keyword id="KW-1185">Reference proteome</keyword>
<keyword id="KW-0732">Signal</keyword>
<keyword id="KW-0812">Transmembrane</keyword>
<keyword id="KW-1133">Transmembrane helix</keyword>
<sequence length="172" mass="18830">MKLFQLLLLVLTISSFIISNNGLVESHQGRMHRGSGERHHRAGGNQQQPQPPSEQQVESSYNSNDDGSSNSWWSATSWYGAGTTSWYSGGTTSNPVGTTTWYSGGTTSNPVGTTSWYSGGFGTYDSDSSSFSYENSSNETIVIYINPVTLVFTLVLLLTFIVLTITQSLRKY</sequence>
<reference key="1">
    <citation type="journal article" date="2005" name="Nature">
        <title>The genome of the social amoeba Dictyostelium discoideum.</title>
        <authorList>
            <person name="Eichinger L."/>
            <person name="Pachebat J.A."/>
            <person name="Gloeckner G."/>
            <person name="Rajandream M.A."/>
            <person name="Sucgang R."/>
            <person name="Berriman M."/>
            <person name="Song J."/>
            <person name="Olsen R."/>
            <person name="Szafranski K."/>
            <person name="Xu Q."/>
            <person name="Tunggal B."/>
            <person name="Kummerfeld S."/>
            <person name="Madera M."/>
            <person name="Konfortov B.A."/>
            <person name="Rivero F."/>
            <person name="Bankier A.T."/>
            <person name="Lehmann R."/>
            <person name="Hamlin N."/>
            <person name="Davies R."/>
            <person name="Gaudet P."/>
            <person name="Fey P."/>
            <person name="Pilcher K."/>
            <person name="Chen G."/>
            <person name="Saunders D."/>
            <person name="Sodergren E.J."/>
            <person name="Davis P."/>
            <person name="Kerhornou A."/>
            <person name="Nie X."/>
            <person name="Hall N."/>
            <person name="Anjard C."/>
            <person name="Hemphill L."/>
            <person name="Bason N."/>
            <person name="Farbrother P."/>
            <person name="Desany B."/>
            <person name="Just E."/>
            <person name="Morio T."/>
            <person name="Rost R."/>
            <person name="Churcher C.M."/>
            <person name="Cooper J."/>
            <person name="Haydock S."/>
            <person name="van Driessche N."/>
            <person name="Cronin A."/>
            <person name="Goodhead I."/>
            <person name="Muzny D.M."/>
            <person name="Mourier T."/>
            <person name="Pain A."/>
            <person name="Lu M."/>
            <person name="Harper D."/>
            <person name="Lindsay R."/>
            <person name="Hauser H."/>
            <person name="James K.D."/>
            <person name="Quiles M."/>
            <person name="Madan Babu M."/>
            <person name="Saito T."/>
            <person name="Buchrieser C."/>
            <person name="Wardroper A."/>
            <person name="Felder M."/>
            <person name="Thangavelu M."/>
            <person name="Johnson D."/>
            <person name="Knights A."/>
            <person name="Loulseged H."/>
            <person name="Mungall K.L."/>
            <person name="Oliver K."/>
            <person name="Price C."/>
            <person name="Quail M.A."/>
            <person name="Urushihara H."/>
            <person name="Hernandez J."/>
            <person name="Rabbinowitsch E."/>
            <person name="Steffen D."/>
            <person name="Sanders M."/>
            <person name="Ma J."/>
            <person name="Kohara Y."/>
            <person name="Sharp S."/>
            <person name="Simmonds M.N."/>
            <person name="Spiegler S."/>
            <person name="Tivey A."/>
            <person name="Sugano S."/>
            <person name="White B."/>
            <person name="Walker D."/>
            <person name="Woodward J.R."/>
            <person name="Winckler T."/>
            <person name="Tanaka Y."/>
            <person name="Shaulsky G."/>
            <person name="Schleicher M."/>
            <person name="Weinstock G.M."/>
            <person name="Rosenthal A."/>
            <person name="Cox E.C."/>
            <person name="Chisholm R.L."/>
            <person name="Gibbs R.A."/>
            <person name="Loomis W.F."/>
            <person name="Platzer M."/>
            <person name="Kay R.R."/>
            <person name="Williams J.G."/>
            <person name="Dear P.H."/>
            <person name="Noegel A.A."/>
            <person name="Barrell B.G."/>
            <person name="Kuspa A."/>
        </authorList>
    </citation>
    <scope>NUCLEOTIDE SEQUENCE [LARGE SCALE GENOMIC DNA]</scope>
    <source>
        <strain>AX4</strain>
    </source>
</reference>
<feature type="signal peptide" evidence="1">
    <location>
        <begin position="1"/>
        <end position="22"/>
    </location>
</feature>
<feature type="chain" id="PRO_0000346890" description="Uncharacterized transmembrane protein DDB_G0291364">
    <location>
        <begin position="23"/>
        <end position="172"/>
    </location>
</feature>
<feature type="topological domain" description="Extracellular" evidence="1">
    <location>
        <begin position="23"/>
        <end position="140"/>
    </location>
</feature>
<feature type="transmembrane region" description="Helical" evidence="1">
    <location>
        <begin position="141"/>
        <end position="161"/>
    </location>
</feature>
<feature type="topological domain" description="Cytoplasmic" evidence="1">
    <location>
        <begin position="162"/>
        <end position="172"/>
    </location>
</feature>
<feature type="region of interest" description="Disordered" evidence="2">
    <location>
        <begin position="27"/>
        <end position="69"/>
    </location>
</feature>
<feature type="compositionally biased region" description="Basic residues" evidence="2">
    <location>
        <begin position="29"/>
        <end position="42"/>
    </location>
</feature>
<feature type="compositionally biased region" description="Low complexity" evidence="2">
    <location>
        <begin position="53"/>
        <end position="69"/>
    </location>
</feature>
<feature type="glycosylation site" description="N-linked (GlcNAc...) asparagine" evidence="1">
    <location>
        <position position="135"/>
    </location>
</feature>
<feature type="glycosylation site" description="N-linked (GlcNAc...) asparagine" evidence="1">
    <location>
        <position position="138"/>
    </location>
</feature>
<gene>
    <name type="ORF">DDB_G0291364</name>
</gene>
<dbReference type="EMBL" id="AAFI02000177">
    <property type="protein sequence ID" value="EAL61666.1"/>
    <property type="molecule type" value="Genomic_DNA"/>
</dbReference>
<dbReference type="RefSeq" id="XP_635165.1">
    <property type="nucleotide sequence ID" value="XM_630073.1"/>
</dbReference>
<dbReference type="SMR" id="Q54ES5"/>
<dbReference type="GlyGen" id="Q54ES5">
    <property type="glycosylation" value="2 sites"/>
</dbReference>
<dbReference type="PaxDb" id="44689-DDB0183845"/>
<dbReference type="EnsemblProtists" id="EAL61666">
    <property type="protein sequence ID" value="EAL61666"/>
    <property type="gene ID" value="DDB_G0291364"/>
</dbReference>
<dbReference type="GeneID" id="8628111"/>
<dbReference type="KEGG" id="ddi:DDB_G0291364"/>
<dbReference type="dictyBase" id="DDB_G0291364"/>
<dbReference type="VEuPathDB" id="AmoebaDB:DDB_G0291364"/>
<dbReference type="HOGENOM" id="CLU_1558111_0_0_1"/>
<dbReference type="InParanoid" id="Q54ES5"/>
<dbReference type="PRO" id="PR:Q54ES5"/>
<dbReference type="Proteomes" id="UP000002195">
    <property type="component" value="Chromosome 6"/>
</dbReference>
<dbReference type="GO" id="GO:0016020">
    <property type="term" value="C:membrane"/>
    <property type="evidence" value="ECO:0007669"/>
    <property type="project" value="UniProtKB-SubCell"/>
</dbReference>
<evidence type="ECO:0000255" key="1"/>
<evidence type="ECO:0000256" key="2">
    <source>
        <dbReference type="SAM" id="MobiDB-lite"/>
    </source>
</evidence>
<evidence type="ECO:0000305" key="3"/>
<name>Y3845_DICDI</name>
<comment type="subcellular location">
    <subcellularLocation>
        <location evidence="3">Membrane</location>
        <topology evidence="3">Single-pass type I membrane protein</topology>
    </subcellularLocation>
</comment>